<reference key="1">
    <citation type="submission" date="2007-09" db="EMBL/GenBank/DDBJ databases">
        <title>Complete sequence of chromosome of Serratia proteamaculans 568.</title>
        <authorList>
            <consortium name="US DOE Joint Genome Institute"/>
            <person name="Copeland A."/>
            <person name="Lucas S."/>
            <person name="Lapidus A."/>
            <person name="Barry K."/>
            <person name="Glavina del Rio T."/>
            <person name="Dalin E."/>
            <person name="Tice H."/>
            <person name="Pitluck S."/>
            <person name="Chain P."/>
            <person name="Malfatti S."/>
            <person name="Shin M."/>
            <person name="Vergez L."/>
            <person name="Schmutz J."/>
            <person name="Larimer F."/>
            <person name="Land M."/>
            <person name="Hauser L."/>
            <person name="Kyrpides N."/>
            <person name="Kim E."/>
            <person name="Taghavi S."/>
            <person name="Newman L."/>
            <person name="Vangronsveld J."/>
            <person name="van der Lelie D."/>
            <person name="Richardson P."/>
        </authorList>
    </citation>
    <scope>NUCLEOTIDE SEQUENCE [LARGE SCALE GENOMIC DNA]</scope>
    <source>
        <strain>568</strain>
    </source>
</reference>
<keyword id="KW-0963">Cytoplasm</keyword>
<keyword id="KW-0489">Methyltransferase</keyword>
<keyword id="KW-0694">RNA-binding</keyword>
<keyword id="KW-0698">rRNA processing</keyword>
<keyword id="KW-0949">S-adenosyl-L-methionine</keyword>
<keyword id="KW-0808">Transferase</keyword>
<evidence type="ECO:0000255" key="1">
    <source>
        <dbReference type="HAMAP-Rule" id="MF_01857"/>
    </source>
</evidence>
<protein>
    <recommendedName>
        <fullName evidence="1">Ribosomal RNA large subunit methyltransferase I</fullName>
        <ecNumber evidence="1">2.1.1.191</ecNumber>
    </recommendedName>
    <alternativeName>
        <fullName evidence="1">23S rRNA m5C1962 methyltransferase</fullName>
    </alternativeName>
    <alternativeName>
        <fullName evidence="1">rRNA (cytosine-C(5)-)-methyltransferase RlmI</fullName>
    </alternativeName>
</protein>
<comment type="function">
    <text evidence="1">Specifically methylates the cytosine at position 1962 (m5C1962) of 23S rRNA.</text>
</comment>
<comment type="catalytic activity">
    <reaction evidence="1">
        <text>cytidine(1962) in 23S rRNA + S-adenosyl-L-methionine = 5-methylcytidine(1962) in 23S rRNA + S-adenosyl-L-homocysteine + H(+)</text>
        <dbReference type="Rhea" id="RHEA:42912"/>
        <dbReference type="Rhea" id="RHEA-COMP:10382"/>
        <dbReference type="Rhea" id="RHEA-COMP:10386"/>
        <dbReference type="ChEBI" id="CHEBI:15378"/>
        <dbReference type="ChEBI" id="CHEBI:57856"/>
        <dbReference type="ChEBI" id="CHEBI:59789"/>
        <dbReference type="ChEBI" id="CHEBI:74483"/>
        <dbReference type="ChEBI" id="CHEBI:82748"/>
        <dbReference type="EC" id="2.1.1.191"/>
    </reaction>
</comment>
<comment type="subcellular location">
    <subcellularLocation>
        <location evidence="1">Cytoplasm</location>
    </subcellularLocation>
</comment>
<comment type="similarity">
    <text evidence="1">Belongs to the methyltransferase superfamily. RlmI family.</text>
</comment>
<sequence length="396" mass="44264">MTVRLFLAKGREKSLLRRHPWVFSGAVQRVEGKALSGETIDIHDAQGKWLARGAYSPESQIRARVWTFLPDEEINIEFFIRRLQQAQNWRDWVAKRDGLDGYRLIAGESDGMPGITIDRFQNFLVLQLLSAGAEYQRAALITALQHCYPECAIYDRSDVAVRKKEGLPLAQGQVVGDLPPALLPITEHGMKLLVDIQQGHKTGFYLDQRDSRLAARNYSAGRRVLNCFSYTGAFAVSALMGGCTQVISVDTSQAALDIAKQNVELNQLDLSKAEFVRDDVFQLLRAYRTQGEKFDLIIMDPPKFVENKNQLAGACRGYKDINMLALQLLNPGGILLSFSCSGLMPTDLFQKILADAAVDAGRDVQFIEQYRQAADHPVIATYPEGLYLKGFACRVM</sequence>
<dbReference type="EC" id="2.1.1.191" evidence="1"/>
<dbReference type="EMBL" id="CP000826">
    <property type="protein sequence ID" value="ABV40868.1"/>
    <property type="molecule type" value="Genomic_DNA"/>
</dbReference>
<dbReference type="SMR" id="A8GCM8"/>
<dbReference type="STRING" id="399741.Spro_1764"/>
<dbReference type="KEGG" id="spe:Spro_1764"/>
<dbReference type="eggNOG" id="COG1092">
    <property type="taxonomic scope" value="Bacteria"/>
</dbReference>
<dbReference type="HOGENOM" id="CLU_014042_0_0_6"/>
<dbReference type="OrthoDB" id="9805492at2"/>
<dbReference type="GO" id="GO:0005737">
    <property type="term" value="C:cytoplasm"/>
    <property type="evidence" value="ECO:0007669"/>
    <property type="project" value="UniProtKB-SubCell"/>
</dbReference>
<dbReference type="GO" id="GO:0003723">
    <property type="term" value="F:RNA binding"/>
    <property type="evidence" value="ECO:0007669"/>
    <property type="project" value="UniProtKB-KW"/>
</dbReference>
<dbReference type="GO" id="GO:0016434">
    <property type="term" value="F:rRNA (cytosine) methyltransferase activity"/>
    <property type="evidence" value="ECO:0007669"/>
    <property type="project" value="UniProtKB-UniRule"/>
</dbReference>
<dbReference type="CDD" id="cd02440">
    <property type="entry name" value="AdoMet_MTases"/>
    <property type="match status" value="1"/>
</dbReference>
<dbReference type="CDD" id="cd21153">
    <property type="entry name" value="PUA_RlmI"/>
    <property type="match status" value="1"/>
</dbReference>
<dbReference type="CDD" id="cd11572">
    <property type="entry name" value="RlmI_M_like"/>
    <property type="match status" value="1"/>
</dbReference>
<dbReference type="Gene3D" id="2.30.130.10">
    <property type="entry name" value="PUA domain"/>
    <property type="match status" value="1"/>
</dbReference>
<dbReference type="Gene3D" id="3.30.750.80">
    <property type="entry name" value="RNA methyltransferase domain (HRMD) like"/>
    <property type="match status" value="1"/>
</dbReference>
<dbReference type="Gene3D" id="3.40.50.150">
    <property type="entry name" value="Vaccinia Virus protein VP39"/>
    <property type="match status" value="1"/>
</dbReference>
<dbReference type="HAMAP" id="MF_01857">
    <property type="entry name" value="23SrRNA_methyltr_I"/>
    <property type="match status" value="1"/>
</dbReference>
<dbReference type="InterPro" id="IPR002478">
    <property type="entry name" value="PUA"/>
</dbReference>
<dbReference type="InterPro" id="IPR015947">
    <property type="entry name" value="PUA-like_sf"/>
</dbReference>
<dbReference type="InterPro" id="IPR036974">
    <property type="entry name" value="PUA_sf"/>
</dbReference>
<dbReference type="InterPro" id="IPR023542">
    <property type="entry name" value="RLMI"/>
</dbReference>
<dbReference type="InterPro" id="IPR041532">
    <property type="entry name" value="RlmI-like_PUA"/>
</dbReference>
<dbReference type="InterPro" id="IPR019614">
    <property type="entry name" value="SAM-dep_methyl-trfase"/>
</dbReference>
<dbReference type="InterPro" id="IPR029063">
    <property type="entry name" value="SAM-dependent_MTases_sf"/>
</dbReference>
<dbReference type="NCBIfam" id="NF011707">
    <property type="entry name" value="PRK15128.1"/>
    <property type="match status" value="1"/>
</dbReference>
<dbReference type="PANTHER" id="PTHR42873">
    <property type="entry name" value="RIBOSOMAL RNA LARGE SUBUNIT METHYLTRANSFERASE"/>
    <property type="match status" value="1"/>
</dbReference>
<dbReference type="PANTHER" id="PTHR42873:SF1">
    <property type="entry name" value="S-ADENOSYLMETHIONINE-DEPENDENT METHYLTRANSFERASE DOMAIN-CONTAINING PROTEIN"/>
    <property type="match status" value="1"/>
</dbReference>
<dbReference type="Pfam" id="PF10672">
    <property type="entry name" value="Methyltrans_SAM"/>
    <property type="match status" value="1"/>
</dbReference>
<dbReference type="Pfam" id="PF17785">
    <property type="entry name" value="PUA_3"/>
    <property type="match status" value="1"/>
</dbReference>
<dbReference type="SMART" id="SM00359">
    <property type="entry name" value="PUA"/>
    <property type="match status" value="1"/>
</dbReference>
<dbReference type="SUPFAM" id="SSF88697">
    <property type="entry name" value="PUA domain-like"/>
    <property type="match status" value="1"/>
</dbReference>
<dbReference type="SUPFAM" id="SSF53335">
    <property type="entry name" value="S-adenosyl-L-methionine-dependent methyltransferases"/>
    <property type="match status" value="1"/>
</dbReference>
<dbReference type="PROSITE" id="PS50890">
    <property type="entry name" value="PUA"/>
    <property type="match status" value="1"/>
</dbReference>
<gene>
    <name evidence="1" type="primary">rlmI</name>
    <name type="ordered locus">Spro_1764</name>
</gene>
<proteinExistence type="inferred from homology"/>
<accession>A8GCM8</accession>
<name>RLMI_SERP5</name>
<organism>
    <name type="scientific">Serratia proteamaculans (strain 568)</name>
    <dbReference type="NCBI Taxonomy" id="399741"/>
    <lineage>
        <taxon>Bacteria</taxon>
        <taxon>Pseudomonadati</taxon>
        <taxon>Pseudomonadota</taxon>
        <taxon>Gammaproteobacteria</taxon>
        <taxon>Enterobacterales</taxon>
        <taxon>Yersiniaceae</taxon>
        <taxon>Serratia</taxon>
    </lineage>
</organism>
<feature type="chain" id="PRO_0000366253" description="Ribosomal RNA large subunit methyltransferase I">
    <location>
        <begin position="1"/>
        <end position="396"/>
    </location>
</feature>
<feature type="domain" description="PUA" evidence="1">
    <location>
        <begin position="2"/>
        <end position="81"/>
    </location>
</feature>